<organism>
    <name type="scientific">Shewanella piezotolerans (strain WP3 / JCM 13877)</name>
    <dbReference type="NCBI Taxonomy" id="225849"/>
    <lineage>
        <taxon>Bacteria</taxon>
        <taxon>Pseudomonadati</taxon>
        <taxon>Pseudomonadota</taxon>
        <taxon>Gammaproteobacteria</taxon>
        <taxon>Alteromonadales</taxon>
        <taxon>Shewanellaceae</taxon>
        <taxon>Shewanella</taxon>
    </lineage>
</organism>
<evidence type="ECO:0000255" key="1">
    <source>
        <dbReference type="HAMAP-Rule" id="MF_00268"/>
    </source>
</evidence>
<dbReference type="EMBL" id="CP000472">
    <property type="protein sequence ID" value="ACJ28153.1"/>
    <property type="molecule type" value="Genomic_DNA"/>
</dbReference>
<dbReference type="RefSeq" id="WP_020911531.1">
    <property type="nucleotide sequence ID" value="NC_011566.1"/>
</dbReference>
<dbReference type="SMR" id="B8CJQ6"/>
<dbReference type="STRING" id="225849.swp_1366"/>
<dbReference type="KEGG" id="swp:swp_1366"/>
<dbReference type="eggNOG" id="COG0468">
    <property type="taxonomic scope" value="Bacteria"/>
</dbReference>
<dbReference type="HOGENOM" id="CLU_040469_3_2_6"/>
<dbReference type="OrthoDB" id="9776733at2"/>
<dbReference type="Proteomes" id="UP000000753">
    <property type="component" value="Chromosome"/>
</dbReference>
<dbReference type="GO" id="GO:0005829">
    <property type="term" value="C:cytosol"/>
    <property type="evidence" value="ECO:0007669"/>
    <property type="project" value="TreeGrafter"/>
</dbReference>
<dbReference type="GO" id="GO:0005524">
    <property type="term" value="F:ATP binding"/>
    <property type="evidence" value="ECO:0007669"/>
    <property type="project" value="UniProtKB-UniRule"/>
</dbReference>
<dbReference type="GO" id="GO:0016887">
    <property type="term" value="F:ATP hydrolysis activity"/>
    <property type="evidence" value="ECO:0007669"/>
    <property type="project" value="InterPro"/>
</dbReference>
<dbReference type="GO" id="GO:0140664">
    <property type="term" value="F:ATP-dependent DNA damage sensor activity"/>
    <property type="evidence" value="ECO:0007669"/>
    <property type="project" value="InterPro"/>
</dbReference>
<dbReference type="GO" id="GO:0003684">
    <property type="term" value="F:damaged DNA binding"/>
    <property type="evidence" value="ECO:0007669"/>
    <property type="project" value="UniProtKB-UniRule"/>
</dbReference>
<dbReference type="GO" id="GO:0003697">
    <property type="term" value="F:single-stranded DNA binding"/>
    <property type="evidence" value="ECO:0007669"/>
    <property type="project" value="UniProtKB-UniRule"/>
</dbReference>
<dbReference type="GO" id="GO:0006310">
    <property type="term" value="P:DNA recombination"/>
    <property type="evidence" value="ECO:0007669"/>
    <property type="project" value="UniProtKB-UniRule"/>
</dbReference>
<dbReference type="GO" id="GO:0006281">
    <property type="term" value="P:DNA repair"/>
    <property type="evidence" value="ECO:0007669"/>
    <property type="project" value="UniProtKB-UniRule"/>
</dbReference>
<dbReference type="GO" id="GO:0009432">
    <property type="term" value="P:SOS response"/>
    <property type="evidence" value="ECO:0007669"/>
    <property type="project" value="UniProtKB-UniRule"/>
</dbReference>
<dbReference type="CDD" id="cd00983">
    <property type="entry name" value="RecA"/>
    <property type="match status" value="1"/>
</dbReference>
<dbReference type="FunFam" id="3.40.50.300:FF:000087">
    <property type="entry name" value="Recombinase RecA"/>
    <property type="match status" value="1"/>
</dbReference>
<dbReference type="Gene3D" id="3.40.50.300">
    <property type="entry name" value="P-loop containing nucleotide triphosphate hydrolases"/>
    <property type="match status" value="1"/>
</dbReference>
<dbReference type="HAMAP" id="MF_00268">
    <property type="entry name" value="RecA"/>
    <property type="match status" value="1"/>
</dbReference>
<dbReference type="InterPro" id="IPR003593">
    <property type="entry name" value="AAA+_ATPase"/>
</dbReference>
<dbReference type="InterPro" id="IPR013765">
    <property type="entry name" value="DNA_recomb/repair_RecA"/>
</dbReference>
<dbReference type="InterPro" id="IPR020584">
    <property type="entry name" value="DNA_recomb/repair_RecA_CS"/>
</dbReference>
<dbReference type="InterPro" id="IPR027417">
    <property type="entry name" value="P-loop_NTPase"/>
</dbReference>
<dbReference type="InterPro" id="IPR049261">
    <property type="entry name" value="RecA-like_C"/>
</dbReference>
<dbReference type="InterPro" id="IPR049428">
    <property type="entry name" value="RecA-like_N"/>
</dbReference>
<dbReference type="InterPro" id="IPR020588">
    <property type="entry name" value="RecA_ATP-bd"/>
</dbReference>
<dbReference type="InterPro" id="IPR023400">
    <property type="entry name" value="RecA_C_sf"/>
</dbReference>
<dbReference type="InterPro" id="IPR020587">
    <property type="entry name" value="RecA_monomer-monomer_interface"/>
</dbReference>
<dbReference type="NCBIfam" id="TIGR02012">
    <property type="entry name" value="tigrfam_recA"/>
    <property type="match status" value="1"/>
</dbReference>
<dbReference type="PANTHER" id="PTHR45900:SF1">
    <property type="entry name" value="MITOCHONDRIAL DNA REPAIR PROTEIN RECA HOMOLOG-RELATED"/>
    <property type="match status" value="1"/>
</dbReference>
<dbReference type="PANTHER" id="PTHR45900">
    <property type="entry name" value="RECA"/>
    <property type="match status" value="1"/>
</dbReference>
<dbReference type="Pfam" id="PF00154">
    <property type="entry name" value="RecA"/>
    <property type="match status" value="1"/>
</dbReference>
<dbReference type="Pfam" id="PF21096">
    <property type="entry name" value="RecA_C"/>
    <property type="match status" value="1"/>
</dbReference>
<dbReference type="PRINTS" id="PR00142">
    <property type="entry name" value="RECA"/>
</dbReference>
<dbReference type="SMART" id="SM00382">
    <property type="entry name" value="AAA"/>
    <property type="match status" value="1"/>
</dbReference>
<dbReference type="SUPFAM" id="SSF52540">
    <property type="entry name" value="P-loop containing nucleoside triphosphate hydrolases"/>
    <property type="match status" value="1"/>
</dbReference>
<dbReference type="SUPFAM" id="SSF54752">
    <property type="entry name" value="RecA protein, C-terminal domain"/>
    <property type="match status" value="1"/>
</dbReference>
<dbReference type="PROSITE" id="PS00321">
    <property type="entry name" value="RECA_1"/>
    <property type="match status" value="1"/>
</dbReference>
<dbReference type="PROSITE" id="PS50162">
    <property type="entry name" value="RECA_2"/>
    <property type="match status" value="1"/>
</dbReference>
<dbReference type="PROSITE" id="PS50163">
    <property type="entry name" value="RECA_3"/>
    <property type="match status" value="1"/>
</dbReference>
<reference key="1">
    <citation type="journal article" date="2008" name="PLoS ONE">
        <title>Environmental adaptation: genomic analysis of the piezotolerant and psychrotolerant deep-sea iron reducing bacterium Shewanella piezotolerans WP3.</title>
        <authorList>
            <person name="Wang F."/>
            <person name="Wang J."/>
            <person name="Jian H."/>
            <person name="Zhang B."/>
            <person name="Li S."/>
            <person name="Wang F."/>
            <person name="Zeng X."/>
            <person name="Gao L."/>
            <person name="Bartlett D.H."/>
            <person name="Yu J."/>
            <person name="Hu S."/>
            <person name="Xiao X."/>
        </authorList>
    </citation>
    <scope>NUCLEOTIDE SEQUENCE [LARGE SCALE GENOMIC DNA]</scope>
    <source>
        <strain>WP3 / JCM 13877</strain>
    </source>
</reference>
<gene>
    <name evidence="1" type="primary">recA</name>
    <name type="ordered locus">swp_1366</name>
</gene>
<name>RECA_SHEPW</name>
<proteinExistence type="inferred from homology"/>
<sequence>MKTDPNKEKALNAVLGQIEKQFGKGSIMKLGEDRSMDVETISTGSLSLDVALGAGGLPMGRIVEIYGPESSGKTTLTLEVIAAAQKQGKTCAFIDAEHALDPVYAQKLGVDIDNLLCSQPDTGEQALEICDALTRSGAVDVIIVDSVAALTPKAEIEGEIGDSHMGLAARMMSQAMRKLAGNLKQSNTLLIFINQIRMKIGVMFGNPETTTGGNALKFYASVRLDIRRTGAIKDRDEVIGNETRVKVVKNKIAAPFKQAEFQILYGQGINSTGELVDLGVVHKLIEKSGAWYAYKGSKIGQGRANAGKYLIENPEISDEIETALRSMLLSKGEKVAAGATDTAGDNVDMETGEVF</sequence>
<feature type="chain" id="PRO_1000193327" description="Protein RecA">
    <location>
        <begin position="1"/>
        <end position="355"/>
    </location>
</feature>
<feature type="binding site" evidence="1">
    <location>
        <begin position="67"/>
        <end position="74"/>
    </location>
    <ligand>
        <name>ATP</name>
        <dbReference type="ChEBI" id="CHEBI:30616"/>
    </ligand>
</feature>
<comment type="function">
    <text evidence="1">Can catalyze the hydrolysis of ATP in the presence of single-stranded DNA, the ATP-dependent uptake of single-stranded DNA by duplex DNA, and the ATP-dependent hybridization of homologous single-stranded DNAs. It interacts with LexA causing its activation and leading to its autocatalytic cleavage.</text>
</comment>
<comment type="subcellular location">
    <subcellularLocation>
        <location evidence="1">Cytoplasm</location>
    </subcellularLocation>
</comment>
<comment type="similarity">
    <text evidence="1">Belongs to the RecA family.</text>
</comment>
<protein>
    <recommendedName>
        <fullName evidence="1">Protein RecA</fullName>
    </recommendedName>
    <alternativeName>
        <fullName evidence="1">Recombinase A</fullName>
    </alternativeName>
</protein>
<keyword id="KW-0067">ATP-binding</keyword>
<keyword id="KW-0963">Cytoplasm</keyword>
<keyword id="KW-0227">DNA damage</keyword>
<keyword id="KW-0233">DNA recombination</keyword>
<keyword id="KW-0234">DNA repair</keyword>
<keyword id="KW-0238">DNA-binding</keyword>
<keyword id="KW-0547">Nucleotide-binding</keyword>
<keyword id="KW-0742">SOS response</keyword>
<accession>B8CJQ6</accession>